<comment type="function">
    <text evidence="1">Catalyzes the attachment of tyrosine to tRNA(Tyr) in a two-step reaction: tyrosine is first activated by ATP to form Tyr-AMP and then transferred to the acceptor end of tRNA(Tyr).</text>
</comment>
<comment type="catalytic activity">
    <reaction evidence="1">
        <text>tRNA(Tyr) + L-tyrosine + ATP = L-tyrosyl-tRNA(Tyr) + AMP + diphosphate + H(+)</text>
        <dbReference type="Rhea" id="RHEA:10220"/>
        <dbReference type="Rhea" id="RHEA-COMP:9706"/>
        <dbReference type="Rhea" id="RHEA-COMP:9707"/>
        <dbReference type="ChEBI" id="CHEBI:15378"/>
        <dbReference type="ChEBI" id="CHEBI:30616"/>
        <dbReference type="ChEBI" id="CHEBI:33019"/>
        <dbReference type="ChEBI" id="CHEBI:58315"/>
        <dbReference type="ChEBI" id="CHEBI:78442"/>
        <dbReference type="ChEBI" id="CHEBI:78536"/>
        <dbReference type="ChEBI" id="CHEBI:456215"/>
        <dbReference type="EC" id="6.1.1.1"/>
    </reaction>
</comment>
<comment type="subunit">
    <text evidence="1">Homodimer.</text>
</comment>
<comment type="subcellular location">
    <subcellularLocation>
        <location evidence="1">Cytoplasm</location>
    </subcellularLocation>
</comment>
<comment type="similarity">
    <text evidence="1">Belongs to the class-I aminoacyl-tRNA synthetase family. TyrS type 1 subfamily.</text>
</comment>
<name>SYY_MYCGA</name>
<dbReference type="EC" id="6.1.1.1" evidence="1"/>
<dbReference type="EMBL" id="AE015450">
    <property type="protein sequence ID" value="AAP56639.2"/>
    <property type="molecule type" value="Genomic_DNA"/>
</dbReference>
<dbReference type="RefSeq" id="WP_011113532.1">
    <property type="nucleotide sequence ID" value="NC_004829.2"/>
</dbReference>
<dbReference type="SMR" id="Q7NBH9"/>
<dbReference type="KEGG" id="mga:MGA_1144"/>
<dbReference type="PATRIC" id="fig|233150.7.peg.319"/>
<dbReference type="HOGENOM" id="CLU_024003_0_2_14"/>
<dbReference type="OrthoDB" id="9804243at2"/>
<dbReference type="Proteomes" id="UP000001418">
    <property type="component" value="Chromosome"/>
</dbReference>
<dbReference type="GO" id="GO:0005829">
    <property type="term" value="C:cytosol"/>
    <property type="evidence" value="ECO:0007669"/>
    <property type="project" value="TreeGrafter"/>
</dbReference>
<dbReference type="GO" id="GO:0005524">
    <property type="term" value="F:ATP binding"/>
    <property type="evidence" value="ECO:0007669"/>
    <property type="project" value="UniProtKB-UniRule"/>
</dbReference>
<dbReference type="GO" id="GO:0003723">
    <property type="term" value="F:RNA binding"/>
    <property type="evidence" value="ECO:0007669"/>
    <property type="project" value="UniProtKB-KW"/>
</dbReference>
<dbReference type="GO" id="GO:0004831">
    <property type="term" value="F:tyrosine-tRNA ligase activity"/>
    <property type="evidence" value="ECO:0007669"/>
    <property type="project" value="UniProtKB-UniRule"/>
</dbReference>
<dbReference type="GO" id="GO:0006437">
    <property type="term" value="P:tyrosyl-tRNA aminoacylation"/>
    <property type="evidence" value="ECO:0007669"/>
    <property type="project" value="UniProtKB-UniRule"/>
</dbReference>
<dbReference type="CDD" id="cd00165">
    <property type="entry name" value="S4"/>
    <property type="match status" value="1"/>
</dbReference>
<dbReference type="CDD" id="cd00805">
    <property type="entry name" value="TyrRS_core"/>
    <property type="match status" value="1"/>
</dbReference>
<dbReference type="Gene3D" id="3.40.50.620">
    <property type="entry name" value="HUPs"/>
    <property type="match status" value="1"/>
</dbReference>
<dbReference type="Gene3D" id="3.10.290.10">
    <property type="entry name" value="RNA-binding S4 domain"/>
    <property type="match status" value="1"/>
</dbReference>
<dbReference type="Gene3D" id="1.10.240.10">
    <property type="entry name" value="Tyrosyl-Transfer RNA Synthetase"/>
    <property type="match status" value="1"/>
</dbReference>
<dbReference type="HAMAP" id="MF_02006">
    <property type="entry name" value="Tyr_tRNA_synth_type1"/>
    <property type="match status" value="1"/>
</dbReference>
<dbReference type="InterPro" id="IPR001412">
    <property type="entry name" value="aa-tRNA-synth_I_CS"/>
</dbReference>
<dbReference type="InterPro" id="IPR002305">
    <property type="entry name" value="aa-tRNA-synth_Ic"/>
</dbReference>
<dbReference type="InterPro" id="IPR014729">
    <property type="entry name" value="Rossmann-like_a/b/a_fold"/>
</dbReference>
<dbReference type="InterPro" id="IPR036986">
    <property type="entry name" value="S4_RNA-bd_sf"/>
</dbReference>
<dbReference type="InterPro" id="IPR054608">
    <property type="entry name" value="SYY-like_C"/>
</dbReference>
<dbReference type="InterPro" id="IPR002307">
    <property type="entry name" value="Tyr-tRNA-ligase"/>
</dbReference>
<dbReference type="InterPro" id="IPR024088">
    <property type="entry name" value="Tyr-tRNA-ligase_bac-type"/>
</dbReference>
<dbReference type="InterPro" id="IPR024107">
    <property type="entry name" value="Tyr-tRNA-ligase_bac_1"/>
</dbReference>
<dbReference type="NCBIfam" id="TIGR00234">
    <property type="entry name" value="tyrS"/>
    <property type="match status" value="1"/>
</dbReference>
<dbReference type="PANTHER" id="PTHR11766:SF0">
    <property type="entry name" value="TYROSINE--TRNA LIGASE, MITOCHONDRIAL"/>
    <property type="match status" value="1"/>
</dbReference>
<dbReference type="PANTHER" id="PTHR11766">
    <property type="entry name" value="TYROSYL-TRNA SYNTHETASE"/>
    <property type="match status" value="1"/>
</dbReference>
<dbReference type="Pfam" id="PF22421">
    <property type="entry name" value="SYY_C-terminal"/>
    <property type="match status" value="1"/>
</dbReference>
<dbReference type="Pfam" id="PF00579">
    <property type="entry name" value="tRNA-synt_1b"/>
    <property type="match status" value="1"/>
</dbReference>
<dbReference type="PRINTS" id="PR01040">
    <property type="entry name" value="TRNASYNTHTYR"/>
</dbReference>
<dbReference type="SUPFAM" id="SSF55174">
    <property type="entry name" value="Alpha-L RNA-binding motif"/>
    <property type="match status" value="1"/>
</dbReference>
<dbReference type="SUPFAM" id="SSF52374">
    <property type="entry name" value="Nucleotidylyl transferase"/>
    <property type="match status" value="1"/>
</dbReference>
<dbReference type="PROSITE" id="PS00178">
    <property type="entry name" value="AA_TRNA_LIGASE_I"/>
    <property type="match status" value="1"/>
</dbReference>
<dbReference type="PROSITE" id="PS50889">
    <property type="entry name" value="S4"/>
    <property type="match status" value="1"/>
</dbReference>
<accession>Q7NBH9</accession>
<gene>
    <name evidence="1" type="primary">tyrS</name>
    <name type="ordered locus">MYCGA2890</name>
    <name type="ORF">MGA_1144</name>
</gene>
<proteinExistence type="inferred from homology"/>
<organism>
    <name type="scientific">Mycoplasmoides gallisepticum (strain R(low / passage 15 / clone 2))</name>
    <name type="common">Mycoplasma gallisepticum</name>
    <dbReference type="NCBI Taxonomy" id="710127"/>
    <lineage>
        <taxon>Bacteria</taxon>
        <taxon>Bacillati</taxon>
        <taxon>Mycoplasmatota</taxon>
        <taxon>Mycoplasmoidales</taxon>
        <taxon>Mycoplasmoidaceae</taxon>
        <taxon>Mycoplasmoides</taxon>
    </lineage>
</organism>
<reference key="1">
    <citation type="journal article" date="2003" name="Microbiology">
        <title>The complete genome sequence of the avian pathogen Mycoplasma gallisepticum strain R(low).</title>
        <authorList>
            <person name="Papazisi L."/>
            <person name="Gorton T.S."/>
            <person name="Kutish G."/>
            <person name="Markham P.F."/>
            <person name="Browning G.F."/>
            <person name="Nguyen D.K."/>
            <person name="Swartzell S."/>
            <person name="Madan A."/>
            <person name="Mahairas G."/>
            <person name="Geary S.J."/>
        </authorList>
    </citation>
    <scope>NUCLEOTIDE SEQUENCE [LARGE SCALE GENOMIC DNA]</scope>
    <source>
        <strain>R(low / passage 15 / clone 2)</strain>
    </source>
</reference>
<sequence>MDFISELKKRNIIKQISNEEKLALALKNQKGVYVGFDPSGESLHLGNLIPIIVLRYLKKVGFKTYAILGGATGLIGDPSGKTSERKVQDYEKITANANKIKVQLERYTQAKIINNIDFYQNMNLLNFLRDTGKLINIGYLLDKEFIRSRIENGISYAEFSYNIIQGHDFLHLYEQYDVQVQCGGSDQWGNITTGIDMIKRKYGEEKTPYLCGLTFNLLLNPNGNKFGKSEQGALYLDENLTHPYLIWQYIYNQDDQFIIDLIHRYVLDQSLEQLQELIEAHLANKKTRIAQKFLADYLVKFIHSQEHLDTVHKMNKALFDNQLDQLSDQEKLVVFASFDKVELDRNQSFMVIDFLLQAKVADSKRILRELIAQGSIQIDDLKITDPQAQLNVRKDQQLTVIKKGKKNYFIVVWKG</sequence>
<keyword id="KW-0030">Aminoacyl-tRNA synthetase</keyword>
<keyword id="KW-0067">ATP-binding</keyword>
<keyword id="KW-0963">Cytoplasm</keyword>
<keyword id="KW-0436">Ligase</keyword>
<keyword id="KW-0547">Nucleotide-binding</keyword>
<keyword id="KW-0648">Protein biosynthesis</keyword>
<keyword id="KW-1185">Reference proteome</keyword>
<keyword id="KW-0694">RNA-binding</keyword>
<evidence type="ECO:0000255" key="1">
    <source>
        <dbReference type="HAMAP-Rule" id="MF_02006"/>
    </source>
</evidence>
<protein>
    <recommendedName>
        <fullName evidence="1">Tyrosine--tRNA ligase</fullName>
        <ecNumber evidence="1">6.1.1.1</ecNumber>
    </recommendedName>
    <alternativeName>
        <fullName evidence="1">Tyrosyl-tRNA synthetase</fullName>
        <shortName evidence="1">TyrRS</shortName>
    </alternativeName>
</protein>
<feature type="chain" id="PRO_0000234730" description="Tyrosine--tRNA ligase">
    <location>
        <begin position="1"/>
        <end position="415"/>
    </location>
</feature>
<feature type="domain" description="S4 RNA-binding" evidence="1">
    <location>
        <begin position="350"/>
        <end position="414"/>
    </location>
</feature>
<feature type="short sequence motif" description="'HIGH' region">
    <location>
        <begin position="38"/>
        <end position="47"/>
    </location>
</feature>
<feature type="short sequence motif" description="'KMSKS' region">
    <location>
        <begin position="225"/>
        <end position="229"/>
    </location>
</feature>
<feature type="binding site" evidence="1">
    <location>
        <position position="33"/>
    </location>
    <ligand>
        <name>L-tyrosine</name>
        <dbReference type="ChEBI" id="CHEBI:58315"/>
    </ligand>
</feature>
<feature type="binding site" evidence="1">
    <location>
        <position position="161"/>
    </location>
    <ligand>
        <name>L-tyrosine</name>
        <dbReference type="ChEBI" id="CHEBI:58315"/>
    </ligand>
</feature>
<feature type="binding site" evidence="1">
    <location>
        <position position="165"/>
    </location>
    <ligand>
        <name>L-tyrosine</name>
        <dbReference type="ChEBI" id="CHEBI:58315"/>
    </ligand>
</feature>
<feature type="binding site" evidence="1">
    <location>
        <position position="228"/>
    </location>
    <ligand>
        <name>ATP</name>
        <dbReference type="ChEBI" id="CHEBI:30616"/>
    </ligand>
</feature>